<sequence length="142" mass="16136">MRNYDLSPLLRQWIGFDKLANALQNSGESQSFPPYNIEKSDDNHYRITLALAGFRQEDLDIQLEGTRLTVKGTPEQPENEPKWLHQGLVMQPFSLSFTLAENMEVSGATFTNGLLYIDLTRNEPETIPPQRIAINERSALNS</sequence>
<comment type="function">
    <text evidence="1">Associates with aggregated proteins, together with IbpA, to stabilize and protect them from irreversible denaturation and extensive proteolysis during heat shock and oxidative stress. Aggregated proteins bound to the IbpAB complex are more efficiently refolded and reactivated by the ATP-dependent chaperone systems ClpB and DnaK/DnaJ/GrpE. Its activity is ATP-independent.</text>
</comment>
<comment type="subunit">
    <text evidence="1">Homodimer. Forms homomultimers of about 100-150 subunits at optimal growth temperatures. Conformation changes to oligomers at high temperatures or high ionic concentrations. The decrease in size of the multimers is accompanied by an increase in chaperone activity.</text>
</comment>
<comment type="subcellular location">
    <subcellularLocation>
        <location evidence="1">Cytoplasm</location>
    </subcellularLocation>
</comment>
<comment type="domain">
    <text evidence="1">The N- and C-terminal flexible termini are involved in oligomerization and in the binding of non-native substrate proteins, and are essential for chaperone activity.</text>
</comment>
<comment type="similarity">
    <text evidence="1 2">Belongs to the small heat shock protein (HSP20) family.</text>
</comment>
<reference key="1">
    <citation type="journal article" date="2001" name="Nature">
        <title>Complete genome sequence of a multiple drug resistant Salmonella enterica serovar Typhi CT18.</title>
        <authorList>
            <person name="Parkhill J."/>
            <person name="Dougan G."/>
            <person name="James K.D."/>
            <person name="Thomson N.R."/>
            <person name="Pickard D."/>
            <person name="Wain J."/>
            <person name="Churcher C.M."/>
            <person name="Mungall K.L."/>
            <person name="Bentley S.D."/>
            <person name="Holden M.T.G."/>
            <person name="Sebaihia M."/>
            <person name="Baker S."/>
            <person name="Basham D."/>
            <person name="Brooks K."/>
            <person name="Chillingworth T."/>
            <person name="Connerton P."/>
            <person name="Cronin A."/>
            <person name="Davis P."/>
            <person name="Davies R.M."/>
            <person name="Dowd L."/>
            <person name="White N."/>
            <person name="Farrar J."/>
            <person name="Feltwell T."/>
            <person name="Hamlin N."/>
            <person name="Haque A."/>
            <person name="Hien T.T."/>
            <person name="Holroyd S."/>
            <person name="Jagels K."/>
            <person name="Krogh A."/>
            <person name="Larsen T.S."/>
            <person name="Leather S."/>
            <person name="Moule S."/>
            <person name="O'Gaora P."/>
            <person name="Parry C."/>
            <person name="Quail M.A."/>
            <person name="Rutherford K.M."/>
            <person name="Simmonds M."/>
            <person name="Skelton J."/>
            <person name="Stevens K."/>
            <person name="Whitehead S."/>
            <person name="Barrell B.G."/>
        </authorList>
    </citation>
    <scope>NUCLEOTIDE SEQUENCE [LARGE SCALE GENOMIC DNA]</scope>
    <source>
        <strain>CT18</strain>
    </source>
</reference>
<reference key="2">
    <citation type="journal article" date="2003" name="J. Bacteriol.">
        <title>Comparative genomics of Salmonella enterica serovar Typhi strains Ty2 and CT18.</title>
        <authorList>
            <person name="Deng W."/>
            <person name="Liou S.-R."/>
            <person name="Plunkett G. III"/>
            <person name="Mayhew G.F."/>
            <person name="Rose D.J."/>
            <person name="Burland V."/>
            <person name="Kodoyianni V."/>
            <person name="Schwartz D.C."/>
            <person name="Blattner F.R."/>
        </authorList>
    </citation>
    <scope>NUCLEOTIDE SEQUENCE [LARGE SCALE GENOMIC DNA]</scope>
    <source>
        <strain>ATCC 700931 / Ty2</strain>
    </source>
</reference>
<gene>
    <name evidence="1" type="primary">ibpB</name>
    <name type="ordered locus">STY3970</name>
    <name type="ordered locus">t3710</name>
</gene>
<protein>
    <recommendedName>
        <fullName evidence="1">Small heat shock protein IbpB</fullName>
    </recommendedName>
    <alternativeName>
        <fullName evidence="1">16 kDa heat shock protein B</fullName>
    </alternativeName>
</protein>
<dbReference type="EMBL" id="AL513382">
    <property type="protein sequence ID" value="CAD03186.1"/>
    <property type="molecule type" value="Genomic_DNA"/>
</dbReference>
<dbReference type="EMBL" id="AE014613">
    <property type="protein sequence ID" value="AAO71205.1"/>
    <property type="molecule type" value="Genomic_DNA"/>
</dbReference>
<dbReference type="RefSeq" id="NP_458131.1">
    <property type="nucleotide sequence ID" value="NC_003198.1"/>
</dbReference>
<dbReference type="RefSeq" id="WP_001766501.1">
    <property type="nucleotide sequence ID" value="NZ_WSUR01000001.1"/>
</dbReference>
<dbReference type="SMR" id="Q8Z2L8"/>
<dbReference type="STRING" id="220341.gene:17587829"/>
<dbReference type="KEGG" id="stt:t3710"/>
<dbReference type="KEGG" id="sty:STY3970"/>
<dbReference type="PATRIC" id="fig|220341.7.peg.4057"/>
<dbReference type="eggNOG" id="COG0071">
    <property type="taxonomic scope" value="Bacteria"/>
</dbReference>
<dbReference type="HOGENOM" id="CLU_046737_4_2_6"/>
<dbReference type="OMA" id="NIERCDR"/>
<dbReference type="OrthoDB" id="6871152at2"/>
<dbReference type="Proteomes" id="UP000000541">
    <property type="component" value="Chromosome"/>
</dbReference>
<dbReference type="Proteomes" id="UP000002670">
    <property type="component" value="Chromosome"/>
</dbReference>
<dbReference type="GO" id="GO:0005737">
    <property type="term" value="C:cytoplasm"/>
    <property type="evidence" value="ECO:0007669"/>
    <property type="project" value="UniProtKB-SubCell"/>
</dbReference>
<dbReference type="GO" id="GO:0050821">
    <property type="term" value="P:protein stabilization"/>
    <property type="evidence" value="ECO:0007669"/>
    <property type="project" value="UniProtKB-UniRule"/>
</dbReference>
<dbReference type="CDD" id="cd06470">
    <property type="entry name" value="ACD_IbpA-B_like"/>
    <property type="match status" value="1"/>
</dbReference>
<dbReference type="Gene3D" id="2.60.40.790">
    <property type="match status" value="1"/>
</dbReference>
<dbReference type="HAMAP" id="MF_02001">
    <property type="entry name" value="HSP20_IbpB"/>
    <property type="match status" value="1"/>
</dbReference>
<dbReference type="InterPro" id="IPR002068">
    <property type="entry name" value="A-crystallin/Hsp20_dom"/>
</dbReference>
<dbReference type="InterPro" id="IPR037913">
    <property type="entry name" value="ACD_IbpA/B"/>
</dbReference>
<dbReference type="InterPro" id="IPR008978">
    <property type="entry name" value="HSP20-like_chaperone"/>
</dbReference>
<dbReference type="InterPro" id="IPR022848">
    <property type="entry name" value="HSP20_IbpB"/>
</dbReference>
<dbReference type="NCBIfam" id="NF008618">
    <property type="entry name" value="PRK11597.1"/>
    <property type="match status" value="1"/>
</dbReference>
<dbReference type="PANTHER" id="PTHR47062">
    <property type="match status" value="1"/>
</dbReference>
<dbReference type="PANTHER" id="PTHR47062:SF2">
    <property type="entry name" value="SMALL HEAT SHOCK PROTEIN IBPB"/>
    <property type="match status" value="1"/>
</dbReference>
<dbReference type="Pfam" id="PF00011">
    <property type="entry name" value="HSP20"/>
    <property type="match status" value="1"/>
</dbReference>
<dbReference type="SUPFAM" id="SSF49764">
    <property type="entry name" value="HSP20-like chaperones"/>
    <property type="match status" value="1"/>
</dbReference>
<dbReference type="PROSITE" id="PS01031">
    <property type="entry name" value="SHSP"/>
    <property type="match status" value="1"/>
</dbReference>
<name>IBPB_SALTI</name>
<organism>
    <name type="scientific">Salmonella typhi</name>
    <dbReference type="NCBI Taxonomy" id="90370"/>
    <lineage>
        <taxon>Bacteria</taxon>
        <taxon>Pseudomonadati</taxon>
        <taxon>Pseudomonadota</taxon>
        <taxon>Gammaproteobacteria</taxon>
        <taxon>Enterobacterales</taxon>
        <taxon>Enterobacteriaceae</taxon>
        <taxon>Salmonella</taxon>
    </lineage>
</organism>
<feature type="chain" id="PRO_0000126034" description="Small heat shock protein IbpB">
    <location>
        <begin position="1"/>
        <end position="142"/>
    </location>
</feature>
<feature type="domain" description="sHSP" evidence="2">
    <location>
        <begin position="26"/>
        <end position="137"/>
    </location>
</feature>
<keyword id="KW-0143">Chaperone</keyword>
<keyword id="KW-0963">Cytoplasm</keyword>
<keyword id="KW-0346">Stress response</keyword>
<evidence type="ECO:0000255" key="1">
    <source>
        <dbReference type="HAMAP-Rule" id="MF_02001"/>
    </source>
</evidence>
<evidence type="ECO:0000255" key="2">
    <source>
        <dbReference type="PROSITE-ProRule" id="PRU00285"/>
    </source>
</evidence>
<proteinExistence type="inferred from homology"/>
<accession>Q8Z2L8</accession>
<accession>Q7C6F2</accession>